<keyword id="KW-0067">ATP-binding</keyword>
<keyword id="KW-0997">Cell inner membrane</keyword>
<keyword id="KW-1003">Cell membrane</keyword>
<keyword id="KW-0472">Membrane</keyword>
<keyword id="KW-0547">Nucleotide-binding</keyword>
<keyword id="KW-1185">Reference proteome</keyword>
<keyword id="KW-1278">Translocase</keyword>
<keyword id="KW-0813">Transport</keyword>
<proteinExistence type="inferred from homology"/>
<protein>
    <recommendedName>
        <fullName>Putative ATP-binding protein BAB2_1147</fullName>
        <ecNumber>7.-.-.-</ecNumber>
    </recommendedName>
</protein>
<organism>
    <name type="scientific">Brucella abortus (strain 2308)</name>
    <dbReference type="NCBI Taxonomy" id="359391"/>
    <lineage>
        <taxon>Bacteria</taxon>
        <taxon>Pseudomonadati</taxon>
        <taxon>Pseudomonadota</taxon>
        <taxon>Alphaproteobacteria</taxon>
        <taxon>Hyphomicrobiales</taxon>
        <taxon>Brucellaceae</taxon>
        <taxon>Brucella/Ochrobactrum group</taxon>
        <taxon>Brucella</taxon>
    </lineage>
</organism>
<name>Y3647_BRUA2</name>
<feature type="chain" id="PRO_0000284107" description="Putative ATP-binding protein BAB2_1147">
    <location>
        <begin position="1"/>
        <end position="260"/>
    </location>
</feature>
<feature type="domain" description="ABC transporter" evidence="1">
    <location>
        <begin position="5"/>
        <end position="228"/>
    </location>
</feature>
<feature type="binding site" evidence="1">
    <location>
        <begin position="37"/>
        <end position="44"/>
    </location>
    <ligand>
        <name>ATP</name>
        <dbReference type="ChEBI" id="CHEBI:30616"/>
    </ligand>
</feature>
<accession>Q2YJB5</accession>
<gene>
    <name type="ordered locus">BAB2_1147</name>
</gene>
<dbReference type="EC" id="7.-.-.-"/>
<dbReference type="EMBL" id="AM040265">
    <property type="protein sequence ID" value="CAJ13313.1"/>
    <property type="molecule type" value="Genomic_DNA"/>
</dbReference>
<dbReference type="RefSeq" id="WP_002966594.1">
    <property type="nucleotide sequence ID" value="NZ_KN046823.1"/>
</dbReference>
<dbReference type="SMR" id="Q2YJB5"/>
<dbReference type="STRING" id="359391.BAB2_1147"/>
<dbReference type="KEGG" id="bmf:BAB2_1147"/>
<dbReference type="PATRIC" id="fig|359391.11.peg.1933"/>
<dbReference type="HOGENOM" id="CLU_000604_1_22_5"/>
<dbReference type="PhylomeDB" id="Q2YJB5"/>
<dbReference type="Proteomes" id="UP000002719">
    <property type="component" value="Chromosome II"/>
</dbReference>
<dbReference type="GO" id="GO:0005886">
    <property type="term" value="C:plasma membrane"/>
    <property type="evidence" value="ECO:0007669"/>
    <property type="project" value="UniProtKB-SubCell"/>
</dbReference>
<dbReference type="GO" id="GO:0005524">
    <property type="term" value="F:ATP binding"/>
    <property type="evidence" value="ECO:0007669"/>
    <property type="project" value="UniProtKB-KW"/>
</dbReference>
<dbReference type="GO" id="GO:0016887">
    <property type="term" value="F:ATP hydrolysis activity"/>
    <property type="evidence" value="ECO:0007669"/>
    <property type="project" value="InterPro"/>
</dbReference>
<dbReference type="CDD" id="cd03293">
    <property type="entry name" value="ABC_NrtD_SsuB_transporters"/>
    <property type="match status" value="1"/>
</dbReference>
<dbReference type="Gene3D" id="3.40.50.300">
    <property type="entry name" value="P-loop containing nucleotide triphosphate hydrolases"/>
    <property type="match status" value="1"/>
</dbReference>
<dbReference type="InterPro" id="IPR003593">
    <property type="entry name" value="AAA+_ATPase"/>
</dbReference>
<dbReference type="InterPro" id="IPR003439">
    <property type="entry name" value="ABC_transporter-like_ATP-bd"/>
</dbReference>
<dbReference type="InterPro" id="IPR050166">
    <property type="entry name" value="ABC_transporter_ATP-bind"/>
</dbReference>
<dbReference type="InterPro" id="IPR027417">
    <property type="entry name" value="P-loop_NTPase"/>
</dbReference>
<dbReference type="PANTHER" id="PTHR42788:SF13">
    <property type="entry name" value="ALIPHATIC SULFONATES IMPORT ATP-BINDING PROTEIN SSUB"/>
    <property type="match status" value="1"/>
</dbReference>
<dbReference type="PANTHER" id="PTHR42788">
    <property type="entry name" value="TAURINE IMPORT ATP-BINDING PROTEIN-RELATED"/>
    <property type="match status" value="1"/>
</dbReference>
<dbReference type="Pfam" id="PF00005">
    <property type="entry name" value="ABC_tran"/>
    <property type="match status" value="1"/>
</dbReference>
<dbReference type="SMART" id="SM00382">
    <property type="entry name" value="AAA"/>
    <property type="match status" value="1"/>
</dbReference>
<dbReference type="SUPFAM" id="SSF52540">
    <property type="entry name" value="P-loop containing nucleoside triphosphate hydrolases"/>
    <property type="match status" value="1"/>
</dbReference>
<dbReference type="PROSITE" id="PS50893">
    <property type="entry name" value="ABC_TRANSPORTER_2"/>
    <property type="match status" value="1"/>
</dbReference>
<sequence length="260" mass="28684">MKPKISFNNVVMRYGGFLALDRLNLDIADGEFVTVVGPSGCGKSTAMNIAAGLLQPSGGEILVGDKPVTGPGPERGVIFQQYALFPWLTVRQNVEFGLSVAGMSRVKRREISDHYLSLVGLTDFADALPKALSGGMKQRCAIARAYAAAPEILLMDEPFGALDALTRVHMQDQLLDAWSRERRTVMFITHDVDEAVYLANRVIVMAARPGRLDQIIPVDLPYPRTEAIRLSPEFAAIRNRVWHAVYHQQPQTDQQSSHGQ</sequence>
<evidence type="ECO:0000255" key="1">
    <source>
        <dbReference type="PROSITE-ProRule" id="PRU00434"/>
    </source>
</evidence>
<evidence type="ECO:0000305" key="2"/>
<comment type="function">
    <text evidence="2">Probably part of an ABC transporter complex. Probably Responsible for energy coupling to the transport system (Probable).</text>
</comment>
<comment type="subunit">
    <text evidence="2">The complex is composed of two ATP-binding proteins (BAB2_1147), two transmembrane proteins (BAB2_1148) and a solute-binding protein (BAB2_1146).</text>
</comment>
<comment type="subcellular location">
    <subcellularLocation>
        <location evidence="2">Cell inner membrane</location>
        <topology evidence="2">Peripheral membrane protein</topology>
    </subcellularLocation>
</comment>
<comment type="similarity">
    <text evidence="2">Belongs to the ABC transporter superfamily.</text>
</comment>
<reference key="1">
    <citation type="journal article" date="2005" name="Infect. Immun.">
        <title>Whole-genome analyses of speciation events in pathogenic Brucellae.</title>
        <authorList>
            <person name="Chain P.S."/>
            <person name="Comerci D.J."/>
            <person name="Tolmasky M.E."/>
            <person name="Larimer F.W."/>
            <person name="Malfatti S.A."/>
            <person name="Vergez L.M."/>
            <person name="Aguero F."/>
            <person name="Land M.L."/>
            <person name="Ugalde R.A."/>
            <person name="Garcia E."/>
        </authorList>
    </citation>
    <scope>NUCLEOTIDE SEQUENCE [LARGE SCALE GENOMIC DNA]</scope>
    <source>
        <strain>2308</strain>
    </source>
</reference>